<reference key="1">
    <citation type="journal article" date="2003" name="Science">
        <title>Genome of Geobacter sulfurreducens: metal reduction in subsurface environments.</title>
        <authorList>
            <person name="Methe B.A."/>
            <person name="Nelson K.E."/>
            <person name="Eisen J.A."/>
            <person name="Paulsen I.T."/>
            <person name="Nelson W.C."/>
            <person name="Heidelberg J.F."/>
            <person name="Wu D."/>
            <person name="Wu M."/>
            <person name="Ward N.L."/>
            <person name="Beanan M.J."/>
            <person name="Dodson R.J."/>
            <person name="Madupu R."/>
            <person name="Brinkac L.M."/>
            <person name="Daugherty S.C."/>
            <person name="DeBoy R.T."/>
            <person name="Durkin A.S."/>
            <person name="Gwinn M.L."/>
            <person name="Kolonay J.F."/>
            <person name="Sullivan S.A."/>
            <person name="Haft D.H."/>
            <person name="Selengut J."/>
            <person name="Davidsen T.M."/>
            <person name="Zafar N."/>
            <person name="White O."/>
            <person name="Tran B."/>
            <person name="Romero C."/>
            <person name="Forberger H.A."/>
            <person name="Weidman J.F."/>
            <person name="Khouri H.M."/>
            <person name="Feldblyum T.V."/>
            <person name="Utterback T.R."/>
            <person name="Van Aken S.E."/>
            <person name="Lovley D.R."/>
            <person name="Fraser C.M."/>
        </authorList>
    </citation>
    <scope>NUCLEOTIDE SEQUENCE [LARGE SCALE GENOMIC DNA]</scope>
    <source>
        <strain>ATCC 51573 / DSM 12127 / PCA</strain>
    </source>
</reference>
<evidence type="ECO:0000255" key="1">
    <source>
        <dbReference type="HAMAP-Rule" id="MF_00061"/>
    </source>
</evidence>
<sequence>MKKLTLKAPAKVNYRLDVLRRRPDGYHDLRMIMQRIDLCDEIEICLTDGPGIRVVCGREGVPDGPGNIAWRAADALLALSADKPGIDISITKKIPVAAGLGGGSSDAATVLMGVNELLGLDLPEKRLREIGVTLGADVPFFIFGRTALAEGIGEELTAIDRVPAAWIVVVNPNVPVSTAWVYQNLQLTGEAARVKIPRFFESVAEVCAILSNDLESVTIPRYPVIGEIKRELLAAGALGSLMSGSGPTVFALFEEEDAAVRAAEMMRARSWFAAAVRTI</sequence>
<accession>Q74FE9</accession>
<comment type="function">
    <text evidence="1">Catalyzes the phosphorylation of the position 2 hydroxy group of 4-diphosphocytidyl-2C-methyl-D-erythritol.</text>
</comment>
<comment type="catalytic activity">
    <reaction evidence="1">
        <text>4-CDP-2-C-methyl-D-erythritol + ATP = 4-CDP-2-C-methyl-D-erythritol 2-phosphate + ADP + H(+)</text>
        <dbReference type="Rhea" id="RHEA:18437"/>
        <dbReference type="ChEBI" id="CHEBI:15378"/>
        <dbReference type="ChEBI" id="CHEBI:30616"/>
        <dbReference type="ChEBI" id="CHEBI:57823"/>
        <dbReference type="ChEBI" id="CHEBI:57919"/>
        <dbReference type="ChEBI" id="CHEBI:456216"/>
        <dbReference type="EC" id="2.7.1.148"/>
    </reaction>
</comment>
<comment type="pathway">
    <text evidence="1">Isoprenoid biosynthesis; isopentenyl diphosphate biosynthesis via DXP pathway; isopentenyl diphosphate from 1-deoxy-D-xylulose 5-phosphate: step 3/6.</text>
</comment>
<comment type="similarity">
    <text evidence="1">Belongs to the GHMP kinase family. IspE subfamily.</text>
</comment>
<organism>
    <name type="scientific">Geobacter sulfurreducens (strain ATCC 51573 / DSM 12127 / PCA)</name>
    <dbReference type="NCBI Taxonomy" id="243231"/>
    <lineage>
        <taxon>Bacteria</taxon>
        <taxon>Pseudomonadati</taxon>
        <taxon>Thermodesulfobacteriota</taxon>
        <taxon>Desulfuromonadia</taxon>
        <taxon>Geobacterales</taxon>
        <taxon>Geobacteraceae</taxon>
        <taxon>Geobacter</taxon>
    </lineage>
</organism>
<gene>
    <name evidence="1" type="primary">ispE</name>
    <name type="ordered locus">GSU0660</name>
</gene>
<keyword id="KW-0067">ATP-binding</keyword>
<keyword id="KW-0414">Isoprene biosynthesis</keyword>
<keyword id="KW-0418">Kinase</keyword>
<keyword id="KW-0547">Nucleotide-binding</keyword>
<keyword id="KW-1185">Reference proteome</keyword>
<keyword id="KW-0808">Transferase</keyword>
<dbReference type="EC" id="2.7.1.148" evidence="1"/>
<dbReference type="EMBL" id="AE017180">
    <property type="protein sequence ID" value="AAR33990.1"/>
    <property type="molecule type" value="Genomic_DNA"/>
</dbReference>
<dbReference type="RefSeq" id="NP_951717.1">
    <property type="nucleotide sequence ID" value="NC_002939.5"/>
</dbReference>
<dbReference type="RefSeq" id="WP_010941321.1">
    <property type="nucleotide sequence ID" value="NC_002939.5"/>
</dbReference>
<dbReference type="SMR" id="Q74FE9"/>
<dbReference type="FunCoup" id="Q74FE9">
    <property type="interactions" value="297"/>
</dbReference>
<dbReference type="STRING" id="243231.GSU0660"/>
<dbReference type="EnsemblBacteria" id="AAR33990">
    <property type="protein sequence ID" value="AAR33990"/>
    <property type="gene ID" value="GSU0660"/>
</dbReference>
<dbReference type="KEGG" id="gsu:GSU0660"/>
<dbReference type="PATRIC" id="fig|243231.5.peg.656"/>
<dbReference type="eggNOG" id="COG1947">
    <property type="taxonomic scope" value="Bacteria"/>
</dbReference>
<dbReference type="HOGENOM" id="CLU_053057_1_1_7"/>
<dbReference type="InParanoid" id="Q74FE9"/>
<dbReference type="OrthoDB" id="9809438at2"/>
<dbReference type="UniPathway" id="UPA00056">
    <property type="reaction ID" value="UER00094"/>
</dbReference>
<dbReference type="Proteomes" id="UP000000577">
    <property type="component" value="Chromosome"/>
</dbReference>
<dbReference type="GO" id="GO:0050515">
    <property type="term" value="F:4-(cytidine 5'-diphospho)-2-C-methyl-D-erythritol kinase activity"/>
    <property type="evidence" value="ECO:0000318"/>
    <property type="project" value="GO_Central"/>
</dbReference>
<dbReference type="GO" id="GO:0005524">
    <property type="term" value="F:ATP binding"/>
    <property type="evidence" value="ECO:0007669"/>
    <property type="project" value="UniProtKB-UniRule"/>
</dbReference>
<dbReference type="GO" id="GO:0019288">
    <property type="term" value="P:isopentenyl diphosphate biosynthetic process, methylerythritol 4-phosphate pathway"/>
    <property type="evidence" value="ECO:0007669"/>
    <property type="project" value="UniProtKB-UniRule"/>
</dbReference>
<dbReference type="GO" id="GO:0016114">
    <property type="term" value="P:terpenoid biosynthetic process"/>
    <property type="evidence" value="ECO:0007669"/>
    <property type="project" value="InterPro"/>
</dbReference>
<dbReference type="Gene3D" id="3.30.230.10">
    <property type="match status" value="1"/>
</dbReference>
<dbReference type="Gene3D" id="3.30.70.890">
    <property type="entry name" value="GHMP kinase, C-terminal domain"/>
    <property type="match status" value="1"/>
</dbReference>
<dbReference type="HAMAP" id="MF_00061">
    <property type="entry name" value="IspE"/>
    <property type="match status" value="1"/>
</dbReference>
<dbReference type="InterPro" id="IPR013750">
    <property type="entry name" value="GHMP_kinase_C_dom"/>
</dbReference>
<dbReference type="InterPro" id="IPR036554">
    <property type="entry name" value="GHMP_kinase_C_sf"/>
</dbReference>
<dbReference type="InterPro" id="IPR006204">
    <property type="entry name" value="GHMP_kinase_N_dom"/>
</dbReference>
<dbReference type="InterPro" id="IPR004424">
    <property type="entry name" value="IspE"/>
</dbReference>
<dbReference type="InterPro" id="IPR020568">
    <property type="entry name" value="Ribosomal_Su5_D2-typ_SF"/>
</dbReference>
<dbReference type="InterPro" id="IPR014721">
    <property type="entry name" value="Ribsml_uS5_D2-typ_fold_subgr"/>
</dbReference>
<dbReference type="NCBIfam" id="TIGR00154">
    <property type="entry name" value="ispE"/>
    <property type="match status" value="1"/>
</dbReference>
<dbReference type="NCBIfam" id="NF011202">
    <property type="entry name" value="PRK14608.1"/>
    <property type="match status" value="1"/>
</dbReference>
<dbReference type="PANTHER" id="PTHR43527">
    <property type="entry name" value="4-DIPHOSPHOCYTIDYL-2-C-METHYL-D-ERYTHRITOL KINASE, CHLOROPLASTIC"/>
    <property type="match status" value="1"/>
</dbReference>
<dbReference type="PANTHER" id="PTHR43527:SF2">
    <property type="entry name" value="4-DIPHOSPHOCYTIDYL-2-C-METHYL-D-ERYTHRITOL KINASE, CHLOROPLASTIC"/>
    <property type="match status" value="1"/>
</dbReference>
<dbReference type="Pfam" id="PF08544">
    <property type="entry name" value="GHMP_kinases_C"/>
    <property type="match status" value="1"/>
</dbReference>
<dbReference type="Pfam" id="PF00288">
    <property type="entry name" value="GHMP_kinases_N"/>
    <property type="match status" value="1"/>
</dbReference>
<dbReference type="PIRSF" id="PIRSF010376">
    <property type="entry name" value="IspE"/>
    <property type="match status" value="1"/>
</dbReference>
<dbReference type="SUPFAM" id="SSF55060">
    <property type="entry name" value="GHMP Kinase, C-terminal domain"/>
    <property type="match status" value="1"/>
</dbReference>
<dbReference type="SUPFAM" id="SSF54211">
    <property type="entry name" value="Ribosomal protein S5 domain 2-like"/>
    <property type="match status" value="1"/>
</dbReference>
<feature type="chain" id="PRO_0000189220" description="4-diphosphocytidyl-2-C-methyl-D-erythritol kinase">
    <location>
        <begin position="1"/>
        <end position="279"/>
    </location>
</feature>
<feature type="active site" evidence="1">
    <location>
        <position position="11"/>
    </location>
</feature>
<feature type="active site" evidence="1">
    <location>
        <position position="137"/>
    </location>
</feature>
<feature type="binding site" evidence="1">
    <location>
        <begin position="95"/>
        <end position="105"/>
    </location>
    <ligand>
        <name>ATP</name>
        <dbReference type="ChEBI" id="CHEBI:30616"/>
    </ligand>
</feature>
<protein>
    <recommendedName>
        <fullName evidence="1">4-diphosphocytidyl-2-C-methyl-D-erythritol kinase</fullName>
        <shortName evidence="1">CMK</shortName>
        <ecNumber evidence="1">2.7.1.148</ecNumber>
    </recommendedName>
    <alternativeName>
        <fullName evidence="1">4-(cytidine-5'-diphospho)-2-C-methyl-D-erythritol kinase</fullName>
    </alternativeName>
</protein>
<proteinExistence type="inferred from homology"/>
<name>ISPE_GEOSL</name>